<dbReference type="EC" id="2.1.1.173" evidence="1"/>
<dbReference type="EC" id="2.1.1.264" evidence="1"/>
<dbReference type="EMBL" id="CP000050">
    <property type="protein sequence ID" value="AAY49738.1"/>
    <property type="status" value="ALT_INIT"/>
    <property type="molecule type" value="Genomic_DNA"/>
</dbReference>
<dbReference type="SMR" id="Q4UT85"/>
<dbReference type="KEGG" id="xcb:XC_2689"/>
<dbReference type="HOGENOM" id="CLU_014042_2_0_6"/>
<dbReference type="Proteomes" id="UP000000420">
    <property type="component" value="Chromosome"/>
</dbReference>
<dbReference type="GO" id="GO:0005737">
    <property type="term" value="C:cytoplasm"/>
    <property type="evidence" value="ECO:0007669"/>
    <property type="project" value="UniProtKB-SubCell"/>
</dbReference>
<dbReference type="GO" id="GO:0052915">
    <property type="term" value="F:23S rRNA (guanine(2445)-N(2))-methyltransferase activity"/>
    <property type="evidence" value="ECO:0007669"/>
    <property type="project" value="UniProtKB-UniRule"/>
</dbReference>
<dbReference type="GO" id="GO:0003723">
    <property type="term" value="F:RNA binding"/>
    <property type="evidence" value="ECO:0007669"/>
    <property type="project" value="UniProtKB-KW"/>
</dbReference>
<dbReference type="GO" id="GO:0070043">
    <property type="term" value="F:rRNA (guanine-N7-)-methyltransferase activity"/>
    <property type="evidence" value="ECO:0007669"/>
    <property type="project" value="UniProtKB-UniRule"/>
</dbReference>
<dbReference type="CDD" id="cd02440">
    <property type="entry name" value="AdoMet_MTases"/>
    <property type="match status" value="1"/>
</dbReference>
<dbReference type="CDD" id="cd11715">
    <property type="entry name" value="THUMP_AdoMetMT"/>
    <property type="match status" value="1"/>
</dbReference>
<dbReference type="FunFam" id="3.30.750.80:FF:000003">
    <property type="entry name" value="Ribosomal RNA large subunit methyltransferase K/L"/>
    <property type="match status" value="1"/>
</dbReference>
<dbReference type="Gene3D" id="3.30.2130.30">
    <property type="match status" value="1"/>
</dbReference>
<dbReference type="Gene3D" id="3.30.750.80">
    <property type="entry name" value="RNA methyltransferase domain (HRMD) like"/>
    <property type="match status" value="1"/>
</dbReference>
<dbReference type="Gene3D" id="3.40.50.150">
    <property type="entry name" value="Vaccinia Virus protein VP39"/>
    <property type="match status" value="2"/>
</dbReference>
<dbReference type="HAMAP" id="MF_01858">
    <property type="entry name" value="23SrRNA_methyltr_KL"/>
    <property type="match status" value="1"/>
</dbReference>
<dbReference type="InterPro" id="IPR017244">
    <property type="entry name" value="23SrRNA_methyltr_KL"/>
</dbReference>
<dbReference type="InterPro" id="IPR002052">
    <property type="entry name" value="DNA_methylase_N6_adenine_CS"/>
</dbReference>
<dbReference type="InterPro" id="IPR000241">
    <property type="entry name" value="RlmKL-like_Mtase"/>
</dbReference>
<dbReference type="InterPro" id="IPR053943">
    <property type="entry name" value="RlmKL-like_Mtase_CS"/>
</dbReference>
<dbReference type="InterPro" id="IPR054170">
    <property type="entry name" value="RlmL_1st"/>
</dbReference>
<dbReference type="InterPro" id="IPR019614">
    <property type="entry name" value="SAM-dep_methyl-trfase"/>
</dbReference>
<dbReference type="InterPro" id="IPR029063">
    <property type="entry name" value="SAM-dependent_MTases_sf"/>
</dbReference>
<dbReference type="InterPro" id="IPR004114">
    <property type="entry name" value="THUMP_dom"/>
</dbReference>
<dbReference type="NCBIfam" id="NF008748">
    <property type="entry name" value="PRK11783.1"/>
    <property type="match status" value="1"/>
</dbReference>
<dbReference type="PANTHER" id="PTHR47313">
    <property type="entry name" value="RIBOSOMAL RNA LARGE SUBUNIT METHYLTRANSFERASE K/L"/>
    <property type="match status" value="1"/>
</dbReference>
<dbReference type="PANTHER" id="PTHR47313:SF1">
    <property type="entry name" value="RIBOSOMAL RNA LARGE SUBUNIT METHYLTRANSFERASE K_L"/>
    <property type="match status" value="1"/>
</dbReference>
<dbReference type="Pfam" id="PF10672">
    <property type="entry name" value="Methyltrans_SAM"/>
    <property type="match status" value="1"/>
</dbReference>
<dbReference type="Pfam" id="PF22020">
    <property type="entry name" value="RlmL_1st"/>
    <property type="match status" value="1"/>
</dbReference>
<dbReference type="Pfam" id="PF02926">
    <property type="entry name" value="THUMP"/>
    <property type="match status" value="1"/>
</dbReference>
<dbReference type="Pfam" id="PF01170">
    <property type="entry name" value="UPF0020"/>
    <property type="match status" value="1"/>
</dbReference>
<dbReference type="PIRSF" id="PIRSF037618">
    <property type="entry name" value="RNA_Mtase_bacteria_prd"/>
    <property type="match status" value="1"/>
</dbReference>
<dbReference type="SMART" id="SM00981">
    <property type="entry name" value="THUMP"/>
    <property type="match status" value="1"/>
</dbReference>
<dbReference type="SUPFAM" id="SSF53335">
    <property type="entry name" value="S-adenosyl-L-methionine-dependent methyltransferases"/>
    <property type="match status" value="2"/>
</dbReference>
<dbReference type="PROSITE" id="PS51165">
    <property type="entry name" value="THUMP"/>
    <property type="match status" value="1"/>
</dbReference>
<dbReference type="PROSITE" id="PS01261">
    <property type="entry name" value="UPF0020"/>
    <property type="match status" value="1"/>
</dbReference>
<comment type="function">
    <text evidence="1">Specifically methylates the guanine in position 2445 (m2G2445) and the guanine in position 2069 (m7G2069) of 23S rRNA.</text>
</comment>
<comment type="catalytic activity">
    <reaction evidence="1">
        <text>guanosine(2445) in 23S rRNA + S-adenosyl-L-methionine = N(2)-methylguanosine(2445) in 23S rRNA + S-adenosyl-L-homocysteine + H(+)</text>
        <dbReference type="Rhea" id="RHEA:42740"/>
        <dbReference type="Rhea" id="RHEA-COMP:10215"/>
        <dbReference type="Rhea" id="RHEA-COMP:10216"/>
        <dbReference type="ChEBI" id="CHEBI:15378"/>
        <dbReference type="ChEBI" id="CHEBI:57856"/>
        <dbReference type="ChEBI" id="CHEBI:59789"/>
        <dbReference type="ChEBI" id="CHEBI:74269"/>
        <dbReference type="ChEBI" id="CHEBI:74481"/>
        <dbReference type="EC" id="2.1.1.173"/>
    </reaction>
</comment>
<comment type="catalytic activity">
    <reaction evidence="1">
        <text>guanosine(2069) in 23S rRNA + S-adenosyl-L-methionine = N(2)-methylguanosine(2069) in 23S rRNA + S-adenosyl-L-homocysteine + H(+)</text>
        <dbReference type="Rhea" id="RHEA:43772"/>
        <dbReference type="Rhea" id="RHEA-COMP:10688"/>
        <dbReference type="Rhea" id="RHEA-COMP:10689"/>
        <dbReference type="ChEBI" id="CHEBI:15378"/>
        <dbReference type="ChEBI" id="CHEBI:57856"/>
        <dbReference type="ChEBI" id="CHEBI:59789"/>
        <dbReference type="ChEBI" id="CHEBI:74269"/>
        <dbReference type="ChEBI" id="CHEBI:74481"/>
        <dbReference type="EC" id="2.1.1.264"/>
    </reaction>
</comment>
<comment type="subcellular location">
    <subcellularLocation>
        <location evidence="1">Cytoplasm</location>
    </subcellularLocation>
</comment>
<comment type="similarity">
    <text evidence="1">Belongs to the methyltransferase superfamily. RlmKL family.</text>
</comment>
<comment type="sequence caution" evidence="2">
    <conflict type="erroneous initiation">
        <sequence resource="EMBL-CDS" id="AAY49738"/>
    </conflict>
    <text>Extended N-terminus.</text>
</comment>
<proteinExistence type="inferred from homology"/>
<organism>
    <name type="scientific">Xanthomonas campestris pv. campestris (strain 8004)</name>
    <dbReference type="NCBI Taxonomy" id="314565"/>
    <lineage>
        <taxon>Bacteria</taxon>
        <taxon>Pseudomonadati</taxon>
        <taxon>Pseudomonadota</taxon>
        <taxon>Gammaproteobacteria</taxon>
        <taxon>Lysobacterales</taxon>
        <taxon>Lysobacteraceae</taxon>
        <taxon>Xanthomonas</taxon>
    </lineage>
</organism>
<evidence type="ECO:0000255" key="1">
    <source>
        <dbReference type="HAMAP-Rule" id="MF_01858"/>
    </source>
</evidence>
<evidence type="ECO:0000305" key="2"/>
<protein>
    <recommendedName>
        <fullName evidence="1">Ribosomal RNA large subunit methyltransferase K/L</fullName>
    </recommendedName>
    <domain>
        <recommendedName>
            <fullName evidence="1">23S rRNA m2G2445 methyltransferase</fullName>
            <ecNumber evidence="1">2.1.1.173</ecNumber>
        </recommendedName>
        <alternativeName>
            <fullName evidence="1">rRNA (guanine-N(2)-)-methyltransferase RlmL</fullName>
        </alternativeName>
    </domain>
    <domain>
        <recommendedName>
            <fullName evidence="1">23S rRNA m7G2069 methyltransferase</fullName>
            <ecNumber evidence="1">2.1.1.264</ecNumber>
        </recommendedName>
        <alternativeName>
            <fullName evidence="1">rRNA (guanine-N(7)-)-methyltransferase RlmK</fullName>
        </alternativeName>
    </domain>
</protein>
<reference key="1">
    <citation type="journal article" date="2005" name="Genome Res.">
        <title>Comparative and functional genomic analyses of the pathogenicity of phytopathogen Xanthomonas campestris pv. campestris.</title>
        <authorList>
            <person name="Qian W."/>
            <person name="Jia Y."/>
            <person name="Ren S.-X."/>
            <person name="He Y.-Q."/>
            <person name="Feng J.-X."/>
            <person name="Lu L.-F."/>
            <person name="Sun Q."/>
            <person name="Ying G."/>
            <person name="Tang D.-J."/>
            <person name="Tang H."/>
            <person name="Wu W."/>
            <person name="Hao P."/>
            <person name="Wang L."/>
            <person name="Jiang B.-L."/>
            <person name="Zeng S."/>
            <person name="Gu W.-Y."/>
            <person name="Lu G."/>
            <person name="Rong L."/>
            <person name="Tian Y."/>
            <person name="Yao Z."/>
            <person name="Fu G."/>
            <person name="Chen B."/>
            <person name="Fang R."/>
            <person name="Qiang B."/>
            <person name="Chen Z."/>
            <person name="Zhao G.-P."/>
            <person name="Tang J.-L."/>
            <person name="He C."/>
        </authorList>
    </citation>
    <scope>NUCLEOTIDE SEQUENCE [LARGE SCALE GENOMIC DNA]</scope>
    <source>
        <strain>8004</strain>
    </source>
</reference>
<keyword id="KW-0963">Cytoplasm</keyword>
<keyword id="KW-0489">Methyltransferase</keyword>
<keyword id="KW-0694">RNA-binding</keyword>
<keyword id="KW-0698">rRNA processing</keyword>
<keyword id="KW-0949">S-adenosyl-L-methionine</keyword>
<keyword id="KW-0808">Transferase</keyword>
<sequence>MKFFASCAKGLEYLLADELLALGASKATATISGVNVEGALRDAQRAVLWSRLASRVLWPLTEFDCPDEDALYAGVAELPWHEHLSTGHTLSVDAHVSGTAITHARYAAQRIKDAVVDTIRRQGLERPSVDVESPDLRLNLSLRKGRATISVDLGGGPLHRRGWRMAQNEAPLKENLAAAVLLRAGWPRAYADGGGLLDPMCGSGTLLIEGALMAADVAPGLQRYGSDIPSRWRGFDRDSWQQLVTEARERDSVGRAALKQVIHGSDMDPHAIRAAKENAQVAGVAEAIWFGVREVGDLQTRPQATGVVVCNPPYDERLAADAALYRKLGDTLQRVVPQWRASLLCGNAELAYATGLRAGKKYQLFNGAIECALIVCDPIAVPRRTPLAAPTALSEGAQMVANRLRKNLQKFKKWRAREGIECFRVYDADLPEYSAAIDVYQQADGDRRIFLHVQEYAAPATIPEADVRRRLGELLAAAREVFEVPAERVALKSRERGKGGSKYGRFEQRNEIVNVREHGALLRVNLFDYLDTGLFLDHRPLRGTMAQQSKGRRFLNLFCYTGVASVQAAVAGASATTSVDLSGTYLQWCADNLALNGQAGSKHKLVQADALAWLEAERAHFDVIFCDPPTFSNSARAEDFDIQREHVRLLRAAVARLAPGGVLYFSNNFRRFKLDEEAVSEFAQCEEISPRTIDPDFERHARIHRAWRLTA</sequence>
<feature type="chain" id="PRO_0000366855" description="Ribosomal RNA large subunit methyltransferase K/L">
    <location>
        <begin position="1"/>
        <end position="711"/>
    </location>
</feature>
<feature type="domain" description="THUMP" evidence="1">
    <location>
        <begin position="42"/>
        <end position="153"/>
    </location>
</feature>
<name>RLMKL_XANC8</name>
<gene>
    <name evidence="1" type="primary">rlmL</name>
    <name type="ordered locus">XC_2689</name>
</gene>
<accession>Q4UT85</accession>